<keyword id="KW-0963">Cytoplasm</keyword>
<keyword id="KW-1185">Reference proteome</keyword>
<keyword id="KW-0687">Ribonucleoprotein</keyword>
<keyword id="KW-0689">Ribosomal protein</keyword>
<accession>O59794</accession>
<name>RL17B_SCHPO</name>
<evidence type="ECO:0000250" key="1">
    <source>
        <dbReference type="UniProtKB" id="P46990"/>
    </source>
</evidence>
<evidence type="ECO:0000269" key="2">
    <source>
    </source>
</evidence>
<evidence type="ECO:0000305" key="3"/>
<sequence length="187" mass="20827">MVRYSAAPALETKCAKARGAYLRTHFKNSREVAFTINGMNLKKAFIFLDNVKEHKQAVPFRRFNGGVGRTAQGKEFGVTQARWPVKSVNFFYDLLKNAEANAEAKGLDMDKLIIKHVQVNAAPKQRRRTYRAHGRVTAYLSSPSHIEIIVAEEEEAVPKANDTVSRVSLKQGAKARNLAARKAITSA</sequence>
<comment type="function">
    <text evidence="1">Component of the ribosome, a large ribonucleoprotein complex responsible for the synthesis of proteins in the cell. The small ribosomal subunit (SSU) binds messenger RNAs (mRNAs) and translates the encoded message by selecting cognate aminoacyl-transfer RNA (tRNA) molecules. The large subunit (LSU) contains the ribosomal catalytic site termed the peptidyl transferase center (PTC), which catalyzes the formation of peptide bonds, thereby polymerizing the amino acids delivered by tRNAs into a polypeptide chain. The nascent polypeptides leave the ribosome through a tunnel in the LSU and interact with protein factors that function in enzymatic processing, targeting, and the membrane insertion of nascent chains at the exit of the ribosomal tunnel.</text>
</comment>
<comment type="subunit">
    <text evidence="1">Component of the large ribosomal subunit (LSU). Mature yeast ribosomes consist of a small (40S) and a large (60S) subunit. The 40S small subunit contains 1 molecule of ribosomal RNA (18S rRNA) and at least 33 different proteins. The large 60S subunit contains 3 rRNA molecules (25S, 5.8S and 5S rRNA) and at least 46 different proteins. uL22 is associated with the polypeptide exit tunnel.</text>
</comment>
<comment type="subcellular location">
    <subcellularLocation>
        <location evidence="2">Cytoplasm</location>
    </subcellularLocation>
</comment>
<comment type="miscellaneous">
    <text>There are 2 genes for uL22 in S.pombe.</text>
</comment>
<comment type="similarity">
    <text evidence="3">Belongs to the universal ribosomal protein uL22 family.</text>
</comment>
<proteinExistence type="inferred from homology"/>
<reference key="1">
    <citation type="journal article" date="2002" name="Nature">
        <title>The genome sequence of Schizosaccharomyces pombe.</title>
        <authorList>
            <person name="Wood V."/>
            <person name="Gwilliam R."/>
            <person name="Rajandream M.A."/>
            <person name="Lyne M.H."/>
            <person name="Lyne R."/>
            <person name="Stewart A."/>
            <person name="Sgouros J.G."/>
            <person name="Peat N."/>
            <person name="Hayles J."/>
            <person name="Baker S.G."/>
            <person name="Basham D."/>
            <person name="Bowman S."/>
            <person name="Brooks K."/>
            <person name="Brown D."/>
            <person name="Brown S."/>
            <person name="Chillingworth T."/>
            <person name="Churcher C.M."/>
            <person name="Collins M."/>
            <person name="Connor R."/>
            <person name="Cronin A."/>
            <person name="Davis P."/>
            <person name="Feltwell T."/>
            <person name="Fraser A."/>
            <person name="Gentles S."/>
            <person name="Goble A."/>
            <person name="Hamlin N."/>
            <person name="Harris D.E."/>
            <person name="Hidalgo J."/>
            <person name="Hodgson G."/>
            <person name="Holroyd S."/>
            <person name="Hornsby T."/>
            <person name="Howarth S."/>
            <person name="Huckle E.J."/>
            <person name="Hunt S."/>
            <person name="Jagels K."/>
            <person name="James K.D."/>
            <person name="Jones L."/>
            <person name="Jones M."/>
            <person name="Leather S."/>
            <person name="McDonald S."/>
            <person name="McLean J."/>
            <person name="Mooney P."/>
            <person name="Moule S."/>
            <person name="Mungall K.L."/>
            <person name="Murphy L.D."/>
            <person name="Niblett D."/>
            <person name="Odell C."/>
            <person name="Oliver K."/>
            <person name="O'Neil S."/>
            <person name="Pearson D."/>
            <person name="Quail M.A."/>
            <person name="Rabbinowitsch E."/>
            <person name="Rutherford K.M."/>
            <person name="Rutter S."/>
            <person name="Saunders D."/>
            <person name="Seeger K."/>
            <person name="Sharp S."/>
            <person name="Skelton J."/>
            <person name="Simmonds M.N."/>
            <person name="Squares R."/>
            <person name="Squares S."/>
            <person name="Stevens K."/>
            <person name="Taylor K."/>
            <person name="Taylor R.G."/>
            <person name="Tivey A."/>
            <person name="Walsh S.V."/>
            <person name="Warren T."/>
            <person name="Whitehead S."/>
            <person name="Woodward J.R."/>
            <person name="Volckaert G."/>
            <person name="Aert R."/>
            <person name="Robben J."/>
            <person name="Grymonprez B."/>
            <person name="Weltjens I."/>
            <person name="Vanstreels E."/>
            <person name="Rieger M."/>
            <person name="Schaefer M."/>
            <person name="Mueller-Auer S."/>
            <person name="Gabel C."/>
            <person name="Fuchs M."/>
            <person name="Duesterhoeft A."/>
            <person name="Fritzc C."/>
            <person name="Holzer E."/>
            <person name="Moestl D."/>
            <person name="Hilbert H."/>
            <person name="Borzym K."/>
            <person name="Langer I."/>
            <person name="Beck A."/>
            <person name="Lehrach H."/>
            <person name="Reinhardt R."/>
            <person name="Pohl T.M."/>
            <person name="Eger P."/>
            <person name="Zimmermann W."/>
            <person name="Wedler H."/>
            <person name="Wambutt R."/>
            <person name="Purnelle B."/>
            <person name="Goffeau A."/>
            <person name="Cadieu E."/>
            <person name="Dreano S."/>
            <person name="Gloux S."/>
            <person name="Lelaure V."/>
            <person name="Mottier S."/>
            <person name="Galibert F."/>
            <person name="Aves S.J."/>
            <person name="Xiang Z."/>
            <person name="Hunt C."/>
            <person name="Moore K."/>
            <person name="Hurst S.M."/>
            <person name="Lucas M."/>
            <person name="Rochet M."/>
            <person name="Gaillardin C."/>
            <person name="Tallada V.A."/>
            <person name="Garzon A."/>
            <person name="Thode G."/>
            <person name="Daga R.R."/>
            <person name="Cruzado L."/>
            <person name="Jimenez J."/>
            <person name="Sanchez M."/>
            <person name="del Rey F."/>
            <person name="Benito J."/>
            <person name="Dominguez A."/>
            <person name="Revuelta J.L."/>
            <person name="Moreno S."/>
            <person name="Armstrong J."/>
            <person name="Forsburg S.L."/>
            <person name="Cerutti L."/>
            <person name="Lowe T."/>
            <person name="McCombie W.R."/>
            <person name="Paulsen I."/>
            <person name="Potashkin J."/>
            <person name="Shpakovski G.V."/>
            <person name="Ussery D."/>
            <person name="Barrell B.G."/>
            <person name="Nurse P."/>
        </authorList>
    </citation>
    <scope>NUCLEOTIDE SEQUENCE [LARGE SCALE GENOMIC DNA]</scope>
    <source>
        <strain>972 / ATCC 24843</strain>
    </source>
</reference>
<reference key="2">
    <citation type="journal article" date="2006" name="Nat. Biotechnol.">
        <title>ORFeome cloning and global analysis of protein localization in the fission yeast Schizosaccharomyces pombe.</title>
        <authorList>
            <person name="Matsuyama A."/>
            <person name="Arai R."/>
            <person name="Yashiroda Y."/>
            <person name="Shirai A."/>
            <person name="Kamata A."/>
            <person name="Sekido S."/>
            <person name="Kobayashi Y."/>
            <person name="Hashimoto A."/>
            <person name="Hamamoto M."/>
            <person name="Hiraoka Y."/>
            <person name="Horinouchi S."/>
            <person name="Yoshida M."/>
        </authorList>
    </citation>
    <scope>SUBCELLULAR LOCATION [LARGE SCALE ANALYSIS]</scope>
</reference>
<feature type="chain" id="PRO_0000125345" description="Large ribosomal subunit protein uL22B">
    <location>
        <begin position="1"/>
        <end position="187"/>
    </location>
</feature>
<organism>
    <name type="scientific">Schizosaccharomyces pombe (strain 972 / ATCC 24843)</name>
    <name type="common">Fission yeast</name>
    <dbReference type="NCBI Taxonomy" id="284812"/>
    <lineage>
        <taxon>Eukaryota</taxon>
        <taxon>Fungi</taxon>
        <taxon>Dikarya</taxon>
        <taxon>Ascomycota</taxon>
        <taxon>Taphrinomycotina</taxon>
        <taxon>Schizosaccharomycetes</taxon>
        <taxon>Schizosaccharomycetales</taxon>
        <taxon>Schizosaccharomycetaceae</taxon>
        <taxon>Schizosaccharomyces</taxon>
    </lineage>
</organism>
<dbReference type="EMBL" id="CU329672">
    <property type="protein sequence ID" value="CAA18285.1"/>
    <property type="molecule type" value="Genomic_DNA"/>
</dbReference>
<dbReference type="PIR" id="T41333">
    <property type="entry name" value="T41333"/>
</dbReference>
<dbReference type="RefSeq" id="NP_587841.1">
    <property type="nucleotide sequence ID" value="NM_001022834.2"/>
</dbReference>
<dbReference type="SMR" id="O59794"/>
<dbReference type="BioGRID" id="275586">
    <property type="interactions" value="61"/>
</dbReference>
<dbReference type="FunCoup" id="O59794">
    <property type="interactions" value="434"/>
</dbReference>
<dbReference type="STRING" id="284812.O59794"/>
<dbReference type="iPTMnet" id="O59794"/>
<dbReference type="PaxDb" id="4896-SPCC364.03.1"/>
<dbReference type="EnsemblFungi" id="SPCC364.03.1">
    <property type="protein sequence ID" value="SPCC364.03.1:pep"/>
    <property type="gene ID" value="SPCC364.03"/>
</dbReference>
<dbReference type="GeneID" id="2539013"/>
<dbReference type="KEGG" id="spo:2539013"/>
<dbReference type="PomBase" id="SPCC364.03">
    <property type="gene designation" value="rpl1702"/>
</dbReference>
<dbReference type="VEuPathDB" id="FungiDB:SPCC364.03"/>
<dbReference type="eggNOG" id="KOG3353">
    <property type="taxonomic scope" value="Eukaryota"/>
</dbReference>
<dbReference type="HOGENOM" id="CLU_083987_0_1_1"/>
<dbReference type="InParanoid" id="O59794"/>
<dbReference type="OMA" id="QVNHAPC"/>
<dbReference type="PhylomeDB" id="O59794"/>
<dbReference type="Reactome" id="R-SPO-156827">
    <property type="pathway name" value="L13a-mediated translational silencing of Ceruloplasmin expression"/>
</dbReference>
<dbReference type="Reactome" id="R-SPO-1799339">
    <property type="pathway name" value="SRP-dependent cotranslational protein targeting to membrane"/>
</dbReference>
<dbReference type="Reactome" id="R-SPO-72689">
    <property type="pathway name" value="Formation of a pool of free 40S subunits"/>
</dbReference>
<dbReference type="Reactome" id="R-SPO-72706">
    <property type="pathway name" value="GTP hydrolysis and joining of the 60S ribosomal subunit"/>
</dbReference>
<dbReference type="Reactome" id="R-SPO-975956">
    <property type="pathway name" value="Nonsense Mediated Decay (NMD) independent of the Exon Junction Complex (EJC)"/>
</dbReference>
<dbReference type="Reactome" id="R-SPO-975957">
    <property type="pathway name" value="Nonsense Mediated Decay (NMD) enhanced by the Exon Junction Complex (EJC)"/>
</dbReference>
<dbReference type="PRO" id="PR:O59794"/>
<dbReference type="Proteomes" id="UP000002485">
    <property type="component" value="Chromosome III"/>
</dbReference>
<dbReference type="GO" id="GO:0005829">
    <property type="term" value="C:cytosol"/>
    <property type="evidence" value="ECO:0007005"/>
    <property type="project" value="PomBase"/>
</dbReference>
<dbReference type="GO" id="GO:0022625">
    <property type="term" value="C:cytosolic large ribosomal subunit"/>
    <property type="evidence" value="ECO:0000318"/>
    <property type="project" value="GO_Central"/>
</dbReference>
<dbReference type="GO" id="GO:0030684">
    <property type="term" value="C:preribosome"/>
    <property type="evidence" value="ECO:0000314"/>
    <property type="project" value="PomBase"/>
</dbReference>
<dbReference type="GO" id="GO:0003735">
    <property type="term" value="F:structural constituent of ribosome"/>
    <property type="evidence" value="ECO:0000318"/>
    <property type="project" value="GO_Central"/>
</dbReference>
<dbReference type="GO" id="GO:0002181">
    <property type="term" value="P:cytoplasmic translation"/>
    <property type="evidence" value="ECO:0000318"/>
    <property type="project" value="GO_Central"/>
</dbReference>
<dbReference type="CDD" id="cd00336">
    <property type="entry name" value="Ribosomal_L22"/>
    <property type="match status" value="1"/>
</dbReference>
<dbReference type="FunFam" id="3.90.470.10:FF:000012">
    <property type="entry name" value="60S ribosomal protein L17"/>
    <property type="match status" value="1"/>
</dbReference>
<dbReference type="Gene3D" id="3.90.470.10">
    <property type="entry name" value="Ribosomal protein L22/L17"/>
    <property type="match status" value="1"/>
</dbReference>
<dbReference type="InterPro" id="IPR001063">
    <property type="entry name" value="Ribosomal_uL22"/>
</dbReference>
<dbReference type="InterPro" id="IPR018260">
    <property type="entry name" value="Ribosomal_uL22_CS"/>
</dbReference>
<dbReference type="InterPro" id="IPR005721">
    <property type="entry name" value="Ribosomal_uL22_euk/arc"/>
</dbReference>
<dbReference type="InterPro" id="IPR036394">
    <property type="entry name" value="Ribosomal_uL22_sf"/>
</dbReference>
<dbReference type="NCBIfam" id="TIGR01038">
    <property type="entry name" value="uL22_arch_euk"/>
    <property type="match status" value="1"/>
</dbReference>
<dbReference type="PANTHER" id="PTHR11593">
    <property type="entry name" value="60S RIBOSOMAL PROTEIN L17"/>
    <property type="match status" value="1"/>
</dbReference>
<dbReference type="PANTHER" id="PTHR11593:SF10">
    <property type="entry name" value="60S RIBOSOMAL PROTEIN L17"/>
    <property type="match status" value="1"/>
</dbReference>
<dbReference type="Pfam" id="PF00237">
    <property type="entry name" value="Ribosomal_L22"/>
    <property type="match status" value="1"/>
</dbReference>
<dbReference type="SUPFAM" id="SSF54843">
    <property type="entry name" value="Ribosomal protein L22"/>
    <property type="match status" value="1"/>
</dbReference>
<dbReference type="PROSITE" id="PS00464">
    <property type="entry name" value="RIBOSOMAL_L22"/>
    <property type="match status" value="1"/>
</dbReference>
<protein>
    <recommendedName>
        <fullName evidence="3">Large ribosomal subunit protein uL22B</fullName>
    </recommendedName>
    <alternativeName>
        <fullName>60S ribosomal protein L17-B</fullName>
    </alternativeName>
</protein>
<gene>
    <name type="primary">rpl1702</name>
    <name type="synonym">rpl17</name>
    <name type="synonym">rpl17b</name>
    <name type="ORF">SPCC364.03</name>
</gene>